<organism>
    <name type="scientific">Streptomyces coelicolor (strain ATCC BAA-471 / A3(2) / M145)</name>
    <dbReference type="NCBI Taxonomy" id="100226"/>
    <lineage>
        <taxon>Bacteria</taxon>
        <taxon>Bacillati</taxon>
        <taxon>Actinomycetota</taxon>
        <taxon>Actinomycetes</taxon>
        <taxon>Kitasatosporales</taxon>
        <taxon>Streptomycetaceae</taxon>
        <taxon>Streptomyces</taxon>
        <taxon>Streptomyces albidoflavus group</taxon>
    </lineage>
</organism>
<sequence>MSAIRPAAVVVLAAGEGTRMKSATPKVLHELCGRSLVGHVLAAAGELDPENLVAVVGHAREKVTAHLAEVAPDVRTAVQEQQNGTGHAVRMGLEAMGGAVDGVVVVVCGDTPLLTGETLKALAATHTADGNAVTVLTAEVPDATGYGRIVRDGASGAVTAIVEHKDASESQRAIREINSGVFAFDGQLLADALGKVRTDNSQGEEYLTDVLGILREAGHRVGASVAGDHREIAGINNRVQLAEARRILNDRLLTGAMLAGVTVVDPATTWVDVTVTFEQDVVVHPGTQLHGTTHLAEGCEVGPNTRLTDTRVEAGARVDNTVANGAHVGPQASVGPYAYLRPGTRLGLKSKIGTFVEAKNSSIGEGTKVPHLSYMGDATVGDFTNIGAASVFVNYDGQDKHHTTIGSHCRTGSDNMFVAPVTVGDGAYTAAGSVITKDVPPGSLAVARGQQRNIEGWVARKRPGSAAAKAAEAVSREADGED</sequence>
<keyword id="KW-0012">Acyltransferase</keyword>
<keyword id="KW-0133">Cell shape</keyword>
<keyword id="KW-0961">Cell wall biogenesis/degradation</keyword>
<keyword id="KW-0963">Cytoplasm</keyword>
<keyword id="KW-0460">Magnesium</keyword>
<keyword id="KW-0479">Metal-binding</keyword>
<keyword id="KW-0511">Multifunctional enzyme</keyword>
<keyword id="KW-0548">Nucleotidyltransferase</keyword>
<keyword id="KW-0573">Peptidoglycan synthesis</keyword>
<keyword id="KW-1185">Reference proteome</keyword>
<keyword id="KW-0677">Repeat</keyword>
<keyword id="KW-0808">Transferase</keyword>
<feature type="chain" id="PRO_0000233860" description="Bifunctional protein GlmU">
    <location>
        <begin position="1"/>
        <end position="482"/>
    </location>
</feature>
<feature type="region of interest" description="Pyrophosphorylase" evidence="1">
    <location>
        <begin position="1"/>
        <end position="238"/>
    </location>
</feature>
<feature type="region of interest" description="Linker" evidence="1">
    <location>
        <begin position="239"/>
        <end position="259"/>
    </location>
</feature>
<feature type="region of interest" description="N-acetyltransferase" evidence="1">
    <location>
        <begin position="260"/>
        <end position="482"/>
    </location>
</feature>
<feature type="region of interest" description="Disordered" evidence="2">
    <location>
        <begin position="460"/>
        <end position="482"/>
    </location>
</feature>
<feature type="compositionally biased region" description="Low complexity" evidence="2">
    <location>
        <begin position="464"/>
        <end position="473"/>
    </location>
</feature>
<feature type="active site" description="Proton acceptor" evidence="1">
    <location>
        <position position="371"/>
    </location>
</feature>
<feature type="binding site" evidence="1">
    <location>
        <begin position="12"/>
        <end position="15"/>
    </location>
    <ligand>
        <name>UDP-N-acetyl-alpha-D-glucosamine</name>
        <dbReference type="ChEBI" id="CHEBI:57705"/>
    </ligand>
</feature>
<feature type="binding site" evidence="1">
    <location>
        <position position="26"/>
    </location>
    <ligand>
        <name>UDP-N-acetyl-alpha-D-glucosamine</name>
        <dbReference type="ChEBI" id="CHEBI:57705"/>
    </ligand>
</feature>
<feature type="binding site" evidence="1">
    <location>
        <position position="79"/>
    </location>
    <ligand>
        <name>UDP-N-acetyl-alpha-D-glucosamine</name>
        <dbReference type="ChEBI" id="CHEBI:57705"/>
    </ligand>
</feature>
<feature type="binding site" evidence="1">
    <location>
        <begin position="84"/>
        <end position="85"/>
    </location>
    <ligand>
        <name>UDP-N-acetyl-alpha-D-glucosamine</name>
        <dbReference type="ChEBI" id="CHEBI:57705"/>
    </ligand>
</feature>
<feature type="binding site" evidence="1">
    <location>
        <position position="110"/>
    </location>
    <ligand>
        <name>Mg(2+)</name>
        <dbReference type="ChEBI" id="CHEBI:18420"/>
    </ligand>
</feature>
<feature type="binding site" evidence="1">
    <location>
        <position position="147"/>
    </location>
    <ligand>
        <name>UDP-N-acetyl-alpha-D-glucosamine</name>
        <dbReference type="ChEBI" id="CHEBI:57705"/>
    </ligand>
</feature>
<feature type="binding site" evidence="1">
    <location>
        <position position="163"/>
    </location>
    <ligand>
        <name>UDP-N-acetyl-alpha-D-glucosamine</name>
        <dbReference type="ChEBI" id="CHEBI:57705"/>
    </ligand>
</feature>
<feature type="binding site" evidence="1">
    <location>
        <position position="178"/>
    </location>
    <ligand>
        <name>UDP-N-acetyl-alpha-D-glucosamine</name>
        <dbReference type="ChEBI" id="CHEBI:57705"/>
    </ligand>
</feature>
<feature type="binding site" evidence="1">
    <location>
        <position position="236"/>
    </location>
    <ligand>
        <name>Mg(2+)</name>
        <dbReference type="ChEBI" id="CHEBI:18420"/>
    </ligand>
</feature>
<feature type="binding site" evidence="1">
    <location>
        <position position="236"/>
    </location>
    <ligand>
        <name>UDP-N-acetyl-alpha-D-glucosamine</name>
        <dbReference type="ChEBI" id="CHEBI:57705"/>
    </ligand>
</feature>
<feature type="binding site" evidence="1">
    <location>
        <position position="341"/>
    </location>
    <ligand>
        <name>UDP-N-acetyl-alpha-D-glucosamine</name>
        <dbReference type="ChEBI" id="CHEBI:57705"/>
    </ligand>
</feature>
<feature type="binding site" evidence="1">
    <location>
        <position position="359"/>
    </location>
    <ligand>
        <name>UDP-N-acetyl-alpha-D-glucosamine</name>
        <dbReference type="ChEBI" id="CHEBI:57705"/>
    </ligand>
</feature>
<feature type="binding site" evidence="1">
    <location>
        <position position="374"/>
    </location>
    <ligand>
        <name>UDP-N-acetyl-alpha-D-glucosamine</name>
        <dbReference type="ChEBI" id="CHEBI:57705"/>
    </ligand>
</feature>
<feature type="binding site" evidence="1">
    <location>
        <position position="385"/>
    </location>
    <ligand>
        <name>UDP-N-acetyl-alpha-D-glucosamine</name>
        <dbReference type="ChEBI" id="CHEBI:57705"/>
    </ligand>
</feature>
<feature type="binding site" evidence="1">
    <location>
        <position position="388"/>
    </location>
    <ligand>
        <name>acetyl-CoA</name>
        <dbReference type="ChEBI" id="CHEBI:57288"/>
    </ligand>
</feature>
<feature type="binding site" evidence="1">
    <location>
        <begin position="394"/>
        <end position="395"/>
    </location>
    <ligand>
        <name>acetyl-CoA</name>
        <dbReference type="ChEBI" id="CHEBI:57288"/>
    </ligand>
</feature>
<feature type="binding site" evidence="1">
    <location>
        <position position="413"/>
    </location>
    <ligand>
        <name>acetyl-CoA</name>
        <dbReference type="ChEBI" id="CHEBI:57288"/>
    </ligand>
</feature>
<feature type="binding site" evidence="1">
    <location>
        <position position="431"/>
    </location>
    <ligand>
        <name>acetyl-CoA</name>
        <dbReference type="ChEBI" id="CHEBI:57288"/>
    </ligand>
</feature>
<feature type="binding site" evidence="1">
    <location>
        <position position="448"/>
    </location>
    <ligand>
        <name>acetyl-CoA</name>
        <dbReference type="ChEBI" id="CHEBI:57288"/>
    </ligand>
</feature>
<proteinExistence type="inferred from homology"/>
<evidence type="ECO:0000255" key="1">
    <source>
        <dbReference type="HAMAP-Rule" id="MF_01631"/>
    </source>
</evidence>
<evidence type="ECO:0000256" key="2">
    <source>
        <dbReference type="SAM" id="MobiDB-lite"/>
    </source>
</evidence>
<name>GLMU_STRCO</name>
<protein>
    <recommendedName>
        <fullName evidence="1">Bifunctional protein GlmU</fullName>
    </recommendedName>
    <domain>
        <recommendedName>
            <fullName evidence="1">UDP-N-acetylglucosamine pyrophosphorylase</fullName>
            <ecNumber evidence="1">2.7.7.23</ecNumber>
        </recommendedName>
        <alternativeName>
            <fullName evidence="1">N-acetylglucosamine-1-phosphate uridyltransferase</fullName>
        </alternativeName>
    </domain>
    <domain>
        <recommendedName>
            <fullName evidence="1">Glucosamine-1-phosphate N-acetyltransferase</fullName>
            <ecNumber evidence="1">2.3.1.157</ecNumber>
        </recommendedName>
    </domain>
</protein>
<reference key="1">
    <citation type="journal article" date="2002" name="Nature">
        <title>Complete genome sequence of the model actinomycete Streptomyces coelicolor A3(2).</title>
        <authorList>
            <person name="Bentley S.D."/>
            <person name="Chater K.F."/>
            <person name="Cerdeno-Tarraga A.-M."/>
            <person name="Challis G.L."/>
            <person name="Thomson N.R."/>
            <person name="James K.D."/>
            <person name="Harris D.E."/>
            <person name="Quail M.A."/>
            <person name="Kieser H."/>
            <person name="Harper D."/>
            <person name="Bateman A."/>
            <person name="Brown S."/>
            <person name="Chandra G."/>
            <person name="Chen C.W."/>
            <person name="Collins M."/>
            <person name="Cronin A."/>
            <person name="Fraser A."/>
            <person name="Goble A."/>
            <person name="Hidalgo J."/>
            <person name="Hornsby T."/>
            <person name="Howarth S."/>
            <person name="Huang C.-H."/>
            <person name="Kieser T."/>
            <person name="Larke L."/>
            <person name="Murphy L.D."/>
            <person name="Oliver K."/>
            <person name="O'Neil S."/>
            <person name="Rabbinowitsch E."/>
            <person name="Rajandream M.A."/>
            <person name="Rutherford K.M."/>
            <person name="Rutter S."/>
            <person name="Seeger K."/>
            <person name="Saunders D."/>
            <person name="Sharp S."/>
            <person name="Squares R."/>
            <person name="Squares S."/>
            <person name="Taylor K."/>
            <person name="Warren T."/>
            <person name="Wietzorrek A."/>
            <person name="Woodward J.R."/>
            <person name="Barrell B.G."/>
            <person name="Parkhill J."/>
            <person name="Hopwood D.A."/>
        </authorList>
    </citation>
    <scope>NUCLEOTIDE SEQUENCE [LARGE SCALE GENOMIC DNA]</scope>
    <source>
        <strain>ATCC BAA-471 / A3(2) / M145</strain>
    </source>
</reference>
<dbReference type="EC" id="2.7.7.23" evidence="1"/>
<dbReference type="EC" id="2.3.1.157" evidence="1"/>
<dbReference type="EMBL" id="AL939115">
    <property type="protein sequence ID" value="CAD55493.1"/>
    <property type="molecule type" value="Genomic_DNA"/>
</dbReference>
<dbReference type="RefSeq" id="NP_733593.1">
    <property type="nucleotide sequence ID" value="NC_003888.3"/>
</dbReference>
<dbReference type="RefSeq" id="WP_003975692.1">
    <property type="nucleotide sequence ID" value="NZ_VNID01000013.1"/>
</dbReference>
<dbReference type="SMR" id="Q8CJX6"/>
<dbReference type="FunCoup" id="Q8CJX6">
    <property type="interactions" value="89"/>
</dbReference>
<dbReference type="STRING" id="100226.gene:17760739"/>
<dbReference type="PaxDb" id="100226-SCO3122"/>
<dbReference type="KEGG" id="sco:SCO3122"/>
<dbReference type="PATRIC" id="fig|100226.15.peg.3186"/>
<dbReference type="eggNOG" id="COG1207">
    <property type="taxonomic scope" value="Bacteria"/>
</dbReference>
<dbReference type="HOGENOM" id="CLU_029499_15_2_11"/>
<dbReference type="InParanoid" id="Q8CJX6"/>
<dbReference type="OrthoDB" id="9775031at2"/>
<dbReference type="PhylomeDB" id="Q8CJX6"/>
<dbReference type="UniPathway" id="UPA00113">
    <property type="reaction ID" value="UER00532"/>
</dbReference>
<dbReference type="UniPathway" id="UPA00113">
    <property type="reaction ID" value="UER00533"/>
</dbReference>
<dbReference type="UniPathway" id="UPA00973"/>
<dbReference type="Proteomes" id="UP000001973">
    <property type="component" value="Chromosome"/>
</dbReference>
<dbReference type="GO" id="GO:0005737">
    <property type="term" value="C:cytoplasm"/>
    <property type="evidence" value="ECO:0007669"/>
    <property type="project" value="UniProtKB-SubCell"/>
</dbReference>
<dbReference type="GO" id="GO:0016020">
    <property type="term" value="C:membrane"/>
    <property type="evidence" value="ECO:0007669"/>
    <property type="project" value="GOC"/>
</dbReference>
<dbReference type="GO" id="GO:0019134">
    <property type="term" value="F:glucosamine-1-phosphate N-acetyltransferase activity"/>
    <property type="evidence" value="ECO:0007669"/>
    <property type="project" value="UniProtKB-UniRule"/>
</dbReference>
<dbReference type="GO" id="GO:0000287">
    <property type="term" value="F:magnesium ion binding"/>
    <property type="evidence" value="ECO:0007669"/>
    <property type="project" value="UniProtKB-UniRule"/>
</dbReference>
<dbReference type="GO" id="GO:0003977">
    <property type="term" value="F:UDP-N-acetylglucosamine diphosphorylase activity"/>
    <property type="evidence" value="ECO:0007669"/>
    <property type="project" value="UniProtKB-UniRule"/>
</dbReference>
<dbReference type="GO" id="GO:0000902">
    <property type="term" value="P:cell morphogenesis"/>
    <property type="evidence" value="ECO:0007669"/>
    <property type="project" value="UniProtKB-UniRule"/>
</dbReference>
<dbReference type="GO" id="GO:0071555">
    <property type="term" value="P:cell wall organization"/>
    <property type="evidence" value="ECO:0007669"/>
    <property type="project" value="UniProtKB-KW"/>
</dbReference>
<dbReference type="GO" id="GO:0009245">
    <property type="term" value="P:lipid A biosynthetic process"/>
    <property type="evidence" value="ECO:0007669"/>
    <property type="project" value="UniProtKB-UniRule"/>
</dbReference>
<dbReference type="GO" id="GO:0009252">
    <property type="term" value="P:peptidoglycan biosynthetic process"/>
    <property type="evidence" value="ECO:0007669"/>
    <property type="project" value="UniProtKB-UniRule"/>
</dbReference>
<dbReference type="GO" id="GO:0008360">
    <property type="term" value="P:regulation of cell shape"/>
    <property type="evidence" value="ECO:0007669"/>
    <property type="project" value="UniProtKB-KW"/>
</dbReference>
<dbReference type="GO" id="GO:0006048">
    <property type="term" value="P:UDP-N-acetylglucosamine biosynthetic process"/>
    <property type="evidence" value="ECO:0007669"/>
    <property type="project" value="UniProtKB-UniPathway"/>
</dbReference>
<dbReference type="CDD" id="cd02540">
    <property type="entry name" value="GT2_GlmU_N_bac"/>
    <property type="match status" value="1"/>
</dbReference>
<dbReference type="CDD" id="cd03353">
    <property type="entry name" value="LbH_GlmU_C"/>
    <property type="match status" value="1"/>
</dbReference>
<dbReference type="Gene3D" id="2.160.10.10">
    <property type="entry name" value="Hexapeptide repeat proteins"/>
    <property type="match status" value="1"/>
</dbReference>
<dbReference type="Gene3D" id="3.90.550.10">
    <property type="entry name" value="Spore Coat Polysaccharide Biosynthesis Protein SpsA, Chain A"/>
    <property type="match status" value="1"/>
</dbReference>
<dbReference type="HAMAP" id="MF_01631">
    <property type="entry name" value="GlmU"/>
    <property type="match status" value="1"/>
</dbReference>
<dbReference type="InterPro" id="IPR005882">
    <property type="entry name" value="Bifunctional_GlmU"/>
</dbReference>
<dbReference type="InterPro" id="IPR050065">
    <property type="entry name" value="GlmU-like"/>
</dbReference>
<dbReference type="InterPro" id="IPR038009">
    <property type="entry name" value="GlmU_C_LbH"/>
</dbReference>
<dbReference type="InterPro" id="IPR025877">
    <property type="entry name" value="MobA-like_NTP_Trfase"/>
</dbReference>
<dbReference type="InterPro" id="IPR029044">
    <property type="entry name" value="Nucleotide-diphossugar_trans"/>
</dbReference>
<dbReference type="InterPro" id="IPR011004">
    <property type="entry name" value="Trimer_LpxA-like_sf"/>
</dbReference>
<dbReference type="NCBIfam" id="TIGR01173">
    <property type="entry name" value="glmU"/>
    <property type="match status" value="1"/>
</dbReference>
<dbReference type="NCBIfam" id="NF010932">
    <property type="entry name" value="PRK14352.1"/>
    <property type="match status" value="1"/>
</dbReference>
<dbReference type="PANTHER" id="PTHR43584:SF3">
    <property type="entry name" value="BIFUNCTIONAL PROTEIN GLMU"/>
    <property type="match status" value="1"/>
</dbReference>
<dbReference type="PANTHER" id="PTHR43584">
    <property type="entry name" value="NUCLEOTIDYL TRANSFERASE"/>
    <property type="match status" value="1"/>
</dbReference>
<dbReference type="Pfam" id="PF12804">
    <property type="entry name" value="NTP_transf_3"/>
    <property type="match status" value="1"/>
</dbReference>
<dbReference type="SUPFAM" id="SSF53448">
    <property type="entry name" value="Nucleotide-diphospho-sugar transferases"/>
    <property type="match status" value="1"/>
</dbReference>
<dbReference type="SUPFAM" id="SSF51161">
    <property type="entry name" value="Trimeric LpxA-like enzymes"/>
    <property type="match status" value="1"/>
</dbReference>
<comment type="function">
    <text evidence="1">Catalyzes the last two sequential reactions in the de novo biosynthetic pathway for UDP-N-acetylglucosamine (UDP-GlcNAc). The C-terminal domain catalyzes the transfer of acetyl group from acetyl coenzyme A to glucosamine-1-phosphate (GlcN-1-P) to produce N-acetylglucosamine-1-phosphate (GlcNAc-1-P), which is converted into UDP-GlcNAc by the transfer of uridine 5-monophosphate (from uridine 5-triphosphate), a reaction catalyzed by the N-terminal domain.</text>
</comment>
<comment type="catalytic activity">
    <reaction evidence="1">
        <text>alpha-D-glucosamine 1-phosphate + acetyl-CoA = N-acetyl-alpha-D-glucosamine 1-phosphate + CoA + H(+)</text>
        <dbReference type="Rhea" id="RHEA:13725"/>
        <dbReference type="ChEBI" id="CHEBI:15378"/>
        <dbReference type="ChEBI" id="CHEBI:57287"/>
        <dbReference type="ChEBI" id="CHEBI:57288"/>
        <dbReference type="ChEBI" id="CHEBI:57776"/>
        <dbReference type="ChEBI" id="CHEBI:58516"/>
        <dbReference type="EC" id="2.3.1.157"/>
    </reaction>
</comment>
<comment type="catalytic activity">
    <reaction evidence="1">
        <text>N-acetyl-alpha-D-glucosamine 1-phosphate + UTP + H(+) = UDP-N-acetyl-alpha-D-glucosamine + diphosphate</text>
        <dbReference type="Rhea" id="RHEA:13509"/>
        <dbReference type="ChEBI" id="CHEBI:15378"/>
        <dbReference type="ChEBI" id="CHEBI:33019"/>
        <dbReference type="ChEBI" id="CHEBI:46398"/>
        <dbReference type="ChEBI" id="CHEBI:57705"/>
        <dbReference type="ChEBI" id="CHEBI:57776"/>
        <dbReference type="EC" id="2.7.7.23"/>
    </reaction>
</comment>
<comment type="cofactor">
    <cofactor evidence="1">
        <name>Mg(2+)</name>
        <dbReference type="ChEBI" id="CHEBI:18420"/>
    </cofactor>
    <text evidence="1">Binds 1 Mg(2+) ion per subunit.</text>
</comment>
<comment type="pathway">
    <text evidence="1">Nucleotide-sugar biosynthesis; UDP-N-acetyl-alpha-D-glucosamine biosynthesis; N-acetyl-alpha-D-glucosamine 1-phosphate from alpha-D-glucosamine 6-phosphate (route II): step 2/2.</text>
</comment>
<comment type="pathway">
    <text evidence="1">Nucleotide-sugar biosynthesis; UDP-N-acetyl-alpha-D-glucosamine biosynthesis; UDP-N-acetyl-alpha-D-glucosamine from N-acetyl-alpha-D-glucosamine 1-phosphate: step 1/1.</text>
</comment>
<comment type="pathway">
    <text evidence="1">Bacterial outer membrane biogenesis; LPS lipid A biosynthesis.</text>
</comment>
<comment type="subunit">
    <text evidence="1">Homotrimer.</text>
</comment>
<comment type="subcellular location">
    <subcellularLocation>
        <location evidence="1">Cytoplasm</location>
    </subcellularLocation>
</comment>
<comment type="similarity">
    <text evidence="1">In the N-terminal section; belongs to the N-acetylglucosamine-1-phosphate uridyltransferase family.</text>
</comment>
<comment type="similarity">
    <text evidence="1">In the C-terminal section; belongs to the transferase hexapeptide repeat family.</text>
</comment>
<gene>
    <name evidence="1" type="primary">glmU</name>
    <name type="ordered locus">SCO3122</name>
    <name type="ORF">SCE41.31</name>
    <name type="ORF">SCE66.01</name>
</gene>
<accession>Q8CJX6</accession>